<protein>
    <recommendedName>
        <fullName evidence="7">Omega-lycotoxin-Am1d</fullName>
        <shortName evidence="7">Omega-LCTX-Am1d</shortName>
    </recommendedName>
    <alternativeName>
        <fullName evidence="6 7">Omega-Lsp-IA-like 3</fullName>
    </alternativeName>
    <alternativeName>
        <fullName evidence="7">Omega-lycotoxin-Gsp(267)1d</fullName>
        <shortName evidence="7">Omega-LCTX-Gsp(267)1d</shortName>
    </alternativeName>
</protein>
<name>TLCOD_ALOMR</name>
<evidence type="ECO:0000250" key="1"/>
<evidence type="ECO:0000250" key="2">
    <source>
        <dbReference type="UniProtKB" id="A0A0G3F8Z3"/>
    </source>
</evidence>
<evidence type="ECO:0000250" key="3">
    <source>
        <dbReference type="UniProtKB" id="P0DRA9"/>
    </source>
</evidence>
<evidence type="ECO:0000250" key="4">
    <source>
        <dbReference type="UniProtKB" id="P85079"/>
    </source>
</evidence>
<evidence type="ECO:0000255" key="5"/>
<evidence type="ECO:0000303" key="6">
    <source>
    </source>
</evidence>
<evidence type="ECO:0000305" key="7"/>
<evidence type="ECO:0000305" key="8">
    <source>
    </source>
</evidence>
<dbReference type="EMBL" id="EF187334">
    <property type="protein sequence ID" value="ABP68828.1"/>
    <property type="molecule type" value="mRNA"/>
</dbReference>
<dbReference type="ArachnoServer" id="AS000491">
    <property type="toxin name" value="omega-lycotoxin-Gsp2671d"/>
</dbReference>
<dbReference type="GO" id="GO:0005576">
    <property type="term" value="C:extracellular region"/>
    <property type="evidence" value="ECO:0007669"/>
    <property type="project" value="UniProtKB-SubCell"/>
</dbReference>
<dbReference type="GO" id="GO:0005246">
    <property type="term" value="F:calcium channel regulator activity"/>
    <property type="evidence" value="ECO:0007669"/>
    <property type="project" value="UniProtKB-KW"/>
</dbReference>
<dbReference type="GO" id="GO:0090729">
    <property type="term" value="F:toxin activity"/>
    <property type="evidence" value="ECO:0007669"/>
    <property type="project" value="UniProtKB-KW"/>
</dbReference>
<comment type="function">
    <text evidence="3 4">Modulates Cav2.1/CACNA1A voltage-gated calcium channels (P/Q-type currents) in rat cerebellar Purkinje cells and hippocampal CA1-CA3 neurons (By similarity). At saturating concentrations (&gt;10 nM) decelerates activation kinetics and slightly increases peak amplitude without affecting deactivation kinetics (By similarity). In vivo, does not cause death when intravenously injected into mice (By similarity). In rat models, through its activity on Cav2.1/CACNA1A, has an ameliorative effect on memory defects provoked by hyperstimulation of N-methyl-D-aspartate receptors (NMDARs) in the hippocampus (By similarity).</text>
</comment>
<comment type="subcellular location">
    <subcellularLocation>
        <location evidence="8">Secreted</location>
    </subcellularLocation>
</comment>
<comment type="tissue specificity">
    <text evidence="8">Expressed by the venom gland.</text>
</comment>
<comment type="domain">
    <text evidence="7">The presence of a 'disulfide through disulfide knot' structurally defines this protein as a knottin.</text>
</comment>
<comment type="miscellaneous">
    <text evidence="7">According to the nomenclature proposed by King and colleagues (2008), 'Gsp(267)' comes from the species name 'Geolycosa sp (strain A267TDLS2-KZARNA)' (PubMed:17888477). This species has been reclassified since that study, as indicated in the work of Oparin and colleagues (2016) (PMID:27412961).</text>
</comment>
<comment type="similarity">
    <text evidence="7">Belongs to the neurotoxin omega-lctx family.</text>
</comment>
<keyword id="KW-0108">Calcium channel impairing toxin</keyword>
<keyword id="KW-1015">Disulfide bond</keyword>
<keyword id="KW-0872">Ion channel impairing toxin</keyword>
<keyword id="KW-0960">Knottin</keyword>
<keyword id="KW-0528">Neurotoxin</keyword>
<keyword id="KW-0964">Secreted</keyword>
<keyword id="KW-0732">Signal</keyword>
<keyword id="KW-0800">Toxin</keyword>
<keyword id="KW-1218">Voltage-gated calcium channel impairing toxin</keyword>
<proteinExistence type="inferred from homology"/>
<reference key="1">
    <citation type="journal article" date="2007" name="Toxicon">
        <title>Omega-Lsp-IA, a novel modulator of P-type Ca(2+) channels.</title>
        <authorList>
            <person name="Pluzhnikov K.A."/>
            <person name="Vassilevski A."/>
            <person name="Korolkova Y."/>
            <person name="Fisyunov A."/>
            <person name="Iegorova O."/>
            <person name="Krishtal O."/>
            <person name="Grishin E."/>
        </authorList>
    </citation>
    <scope>NUCLEOTIDE SEQUENCE [MRNA]</scope>
    <source>
        <tissue>Venom gland</tissue>
    </source>
</reference>
<accession>A9XDG2</accession>
<organism>
    <name type="scientific">Alopecosa marikovskyi</name>
    <name type="common">Wolf spider</name>
    <name type="synonym">Lycosa kazakhstanicus</name>
    <dbReference type="NCBI Taxonomy" id="2066572"/>
    <lineage>
        <taxon>Eukaryota</taxon>
        <taxon>Metazoa</taxon>
        <taxon>Ecdysozoa</taxon>
        <taxon>Arthropoda</taxon>
        <taxon>Chelicerata</taxon>
        <taxon>Arachnida</taxon>
        <taxon>Araneae</taxon>
        <taxon>Araneomorphae</taxon>
        <taxon>Entelegynae</taxon>
        <taxon>Lycosoidea</taxon>
        <taxon>Lycosidae</taxon>
        <taxon>Alopecosa</taxon>
    </lineage>
</organism>
<sequence>MKLSIFFVLFFIAIAYCQPEFLDDEEDEVEETLPVAEEGREKSCITWRNSCMHNDKGCCFPWSCVCWSQTVPRNSSRKEKKCQCRLW</sequence>
<feature type="signal peptide" evidence="5">
    <location>
        <begin position="1"/>
        <end position="17"/>
    </location>
</feature>
<feature type="propeptide" id="PRO_0000388739" evidence="1">
    <location>
        <begin position="18"/>
        <end position="40"/>
    </location>
</feature>
<feature type="chain" id="PRO_0000388740" description="Omega-lycotoxin-Am1d">
    <location>
        <begin position="41"/>
        <end position="87"/>
    </location>
</feature>
<feature type="disulfide bond" evidence="2">
    <location>
        <begin position="44"/>
        <end position="59"/>
    </location>
</feature>
<feature type="disulfide bond" evidence="2">
    <location>
        <begin position="51"/>
        <end position="64"/>
    </location>
</feature>
<feature type="disulfide bond" evidence="2">
    <location>
        <begin position="58"/>
        <end position="84"/>
    </location>
</feature>
<feature type="disulfide bond" evidence="2">
    <location>
        <begin position="66"/>
        <end position="82"/>
    </location>
</feature>